<gene>
    <name evidence="1" type="primary">scpB</name>
    <name type="ordered locus">BH1561</name>
</gene>
<name>SCPB_HALH5</name>
<sequence>MTLKELQAAIEGILFVRGDEGVTLEELCDLLELSTDVVYAALEELRLSYTDEARGLRIEEVAHAFRLSTKPELAPYFKKLALSTLQSGLSQAALETLAIIAYRQPITRIEVDEVRGVKSEKAIQTLTSRLLIKEVGRAQGTGRPILYGTTPQFLDHFGLKSLKELPPLPEDIDESSIGEEADLFFQQMEQGSLFHEE</sequence>
<feature type="chain" id="PRO_0000211125" description="Segregation and condensation protein B">
    <location>
        <begin position="1"/>
        <end position="197"/>
    </location>
</feature>
<reference key="1">
    <citation type="journal article" date="2000" name="Nucleic Acids Res.">
        <title>Complete genome sequence of the alkaliphilic bacterium Bacillus halodurans and genomic sequence comparison with Bacillus subtilis.</title>
        <authorList>
            <person name="Takami H."/>
            <person name="Nakasone K."/>
            <person name="Takaki Y."/>
            <person name="Maeno G."/>
            <person name="Sasaki R."/>
            <person name="Masui N."/>
            <person name="Fuji F."/>
            <person name="Hirama C."/>
            <person name="Nakamura Y."/>
            <person name="Ogasawara N."/>
            <person name="Kuhara S."/>
            <person name="Horikoshi K."/>
        </authorList>
    </citation>
    <scope>NUCLEOTIDE SEQUENCE [LARGE SCALE GENOMIC DNA]</scope>
    <source>
        <strain>ATCC BAA-125 / DSM 18197 / FERM 7344 / JCM 9153 / C-125</strain>
    </source>
</reference>
<evidence type="ECO:0000255" key="1">
    <source>
        <dbReference type="HAMAP-Rule" id="MF_01804"/>
    </source>
</evidence>
<proteinExistence type="inferred from homology"/>
<accession>Q9KCL0</accession>
<organism>
    <name type="scientific">Halalkalibacterium halodurans (strain ATCC BAA-125 / DSM 18197 / FERM 7344 / JCM 9153 / C-125)</name>
    <name type="common">Bacillus halodurans</name>
    <dbReference type="NCBI Taxonomy" id="272558"/>
    <lineage>
        <taxon>Bacteria</taxon>
        <taxon>Bacillati</taxon>
        <taxon>Bacillota</taxon>
        <taxon>Bacilli</taxon>
        <taxon>Bacillales</taxon>
        <taxon>Bacillaceae</taxon>
        <taxon>Halalkalibacterium (ex Joshi et al. 2022)</taxon>
    </lineage>
</organism>
<comment type="function">
    <text evidence="1">Participates in chromosomal partition during cell division. May act via the formation of a condensin-like complex containing Smc and ScpA that pull DNA away from mid-cell into both cell halves.</text>
</comment>
<comment type="subunit">
    <text evidence="1">Homodimer. Homodimerization may be required to stabilize the binding of ScpA to the Smc head domains. Component of a cohesin-like complex composed of ScpA, ScpB and the Smc homodimer, in which ScpA and ScpB bind to the head domain of Smc. The presence of the three proteins is required for the association of the complex with DNA.</text>
</comment>
<comment type="subcellular location">
    <subcellularLocation>
        <location evidence="1">Cytoplasm</location>
    </subcellularLocation>
    <text evidence="1">Associated with two foci at the outer edges of the nucleoid region in young cells, and at four foci within both cell halves in older cells.</text>
</comment>
<comment type="similarity">
    <text evidence="1">Belongs to the ScpB family.</text>
</comment>
<protein>
    <recommendedName>
        <fullName evidence="1">Segregation and condensation protein B</fullName>
    </recommendedName>
</protein>
<keyword id="KW-0131">Cell cycle</keyword>
<keyword id="KW-0132">Cell division</keyword>
<keyword id="KW-0159">Chromosome partition</keyword>
<keyword id="KW-0963">Cytoplasm</keyword>
<keyword id="KW-1185">Reference proteome</keyword>
<dbReference type="EMBL" id="BA000004">
    <property type="protein sequence ID" value="BAB05280.1"/>
    <property type="molecule type" value="Genomic_DNA"/>
</dbReference>
<dbReference type="PIR" id="A83845">
    <property type="entry name" value="A83845"/>
</dbReference>
<dbReference type="RefSeq" id="WP_010897724.1">
    <property type="nucleotide sequence ID" value="NC_002570.2"/>
</dbReference>
<dbReference type="SMR" id="Q9KCL0"/>
<dbReference type="STRING" id="272558.gene:10727459"/>
<dbReference type="GeneID" id="87597181"/>
<dbReference type="KEGG" id="bha:BH1561"/>
<dbReference type="eggNOG" id="COG1386">
    <property type="taxonomic scope" value="Bacteria"/>
</dbReference>
<dbReference type="HOGENOM" id="CLU_045647_5_3_9"/>
<dbReference type="OrthoDB" id="9806226at2"/>
<dbReference type="Proteomes" id="UP000001258">
    <property type="component" value="Chromosome"/>
</dbReference>
<dbReference type="GO" id="GO:0005737">
    <property type="term" value="C:cytoplasm"/>
    <property type="evidence" value="ECO:0007669"/>
    <property type="project" value="UniProtKB-SubCell"/>
</dbReference>
<dbReference type="GO" id="GO:0051301">
    <property type="term" value="P:cell division"/>
    <property type="evidence" value="ECO:0007669"/>
    <property type="project" value="UniProtKB-KW"/>
</dbReference>
<dbReference type="GO" id="GO:0051304">
    <property type="term" value="P:chromosome separation"/>
    <property type="evidence" value="ECO:0007669"/>
    <property type="project" value="InterPro"/>
</dbReference>
<dbReference type="GO" id="GO:0006260">
    <property type="term" value="P:DNA replication"/>
    <property type="evidence" value="ECO:0007669"/>
    <property type="project" value="UniProtKB-UniRule"/>
</dbReference>
<dbReference type="Gene3D" id="1.10.10.10">
    <property type="entry name" value="Winged helix-like DNA-binding domain superfamily/Winged helix DNA-binding domain"/>
    <property type="match status" value="2"/>
</dbReference>
<dbReference type="HAMAP" id="MF_01804">
    <property type="entry name" value="ScpB"/>
    <property type="match status" value="1"/>
</dbReference>
<dbReference type="InterPro" id="IPR005234">
    <property type="entry name" value="ScpB_csome_segregation"/>
</dbReference>
<dbReference type="InterPro" id="IPR036388">
    <property type="entry name" value="WH-like_DNA-bd_sf"/>
</dbReference>
<dbReference type="InterPro" id="IPR036390">
    <property type="entry name" value="WH_DNA-bd_sf"/>
</dbReference>
<dbReference type="NCBIfam" id="TIGR00281">
    <property type="entry name" value="SMC-Scp complex subunit ScpB"/>
    <property type="match status" value="1"/>
</dbReference>
<dbReference type="PANTHER" id="PTHR34298">
    <property type="entry name" value="SEGREGATION AND CONDENSATION PROTEIN B"/>
    <property type="match status" value="1"/>
</dbReference>
<dbReference type="PANTHER" id="PTHR34298:SF2">
    <property type="entry name" value="SEGREGATION AND CONDENSATION PROTEIN B"/>
    <property type="match status" value="1"/>
</dbReference>
<dbReference type="Pfam" id="PF04079">
    <property type="entry name" value="SMC_ScpB"/>
    <property type="match status" value="1"/>
</dbReference>
<dbReference type="PIRSF" id="PIRSF019345">
    <property type="entry name" value="ScpB"/>
    <property type="match status" value="1"/>
</dbReference>
<dbReference type="SUPFAM" id="SSF46785">
    <property type="entry name" value="Winged helix' DNA-binding domain"/>
    <property type="match status" value="2"/>
</dbReference>